<accession>B9MJR4</accession>
<keyword id="KW-0028">Amino-acid biosynthesis</keyword>
<keyword id="KW-0963">Cytoplasm</keyword>
<keyword id="KW-0368">Histidine biosynthesis</keyword>
<keyword id="KW-0413">Isomerase</keyword>
<dbReference type="EC" id="5.3.1.16" evidence="1"/>
<dbReference type="EMBL" id="CP001393">
    <property type="protein sequence ID" value="ACM60572.1"/>
    <property type="molecule type" value="Genomic_DNA"/>
</dbReference>
<dbReference type="RefSeq" id="WP_015907933.1">
    <property type="nucleotide sequence ID" value="NC_012034.1"/>
</dbReference>
<dbReference type="SMR" id="B9MJR4"/>
<dbReference type="STRING" id="521460.Athe_1474"/>
<dbReference type="GeneID" id="31772819"/>
<dbReference type="KEGG" id="ate:Athe_1474"/>
<dbReference type="eggNOG" id="COG0106">
    <property type="taxonomic scope" value="Bacteria"/>
</dbReference>
<dbReference type="HOGENOM" id="CLU_048577_1_2_9"/>
<dbReference type="UniPathway" id="UPA00031">
    <property type="reaction ID" value="UER00009"/>
</dbReference>
<dbReference type="Proteomes" id="UP000007723">
    <property type="component" value="Chromosome"/>
</dbReference>
<dbReference type="GO" id="GO:0005737">
    <property type="term" value="C:cytoplasm"/>
    <property type="evidence" value="ECO:0007669"/>
    <property type="project" value="UniProtKB-SubCell"/>
</dbReference>
<dbReference type="GO" id="GO:0003949">
    <property type="term" value="F:1-(5-phosphoribosyl)-5-[(5-phosphoribosylamino)methylideneamino]imidazole-4-carboxamide isomerase activity"/>
    <property type="evidence" value="ECO:0007669"/>
    <property type="project" value="UniProtKB-UniRule"/>
</dbReference>
<dbReference type="GO" id="GO:0000105">
    <property type="term" value="P:L-histidine biosynthetic process"/>
    <property type="evidence" value="ECO:0007669"/>
    <property type="project" value="UniProtKB-UniRule"/>
</dbReference>
<dbReference type="GO" id="GO:0000162">
    <property type="term" value="P:L-tryptophan biosynthetic process"/>
    <property type="evidence" value="ECO:0007669"/>
    <property type="project" value="TreeGrafter"/>
</dbReference>
<dbReference type="CDD" id="cd04732">
    <property type="entry name" value="HisA"/>
    <property type="match status" value="1"/>
</dbReference>
<dbReference type="FunFam" id="3.20.20.70:FF:000009">
    <property type="entry name" value="1-(5-phosphoribosyl)-5-[(5-phosphoribosylamino)methylideneamino] imidazole-4-carboxamide isomerase"/>
    <property type="match status" value="1"/>
</dbReference>
<dbReference type="Gene3D" id="3.20.20.70">
    <property type="entry name" value="Aldolase class I"/>
    <property type="match status" value="1"/>
</dbReference>
<dbReference type="HAMAP" id="MF_01014">
    <property type="entry name" value="HisA"/>
    <property type="match status" value="1"/>
</dbReference>
<dbReference type="InterPro" id="IPR013785">
    <property type="entry name" value="Aldolase_TIM"/>
</dbReference>
<dbReference type="InterPro" id="IPR006062">
    <property type="entry name" value="His_biosynth"/>
</dbReference>
<dbReference type="InterPro" id="IPR006063">
    <property type="entry name" value="HisA_bact_arch"/>
</dbReference>
<dbReference type="InterPro" id="IPR044524">
    <property type="entry name" value="Isoase_HisA-like"/>
</dbReference>
<dbReference type="InterPro" id="IPR023016">
    <property type="entry name" value="Isoase_HisA-like_bact"/>
</dbReference>
<dbReference type="InterPro" id="IPR011060">
    <property type="entry name" value="RibuloseP-bd_barrel"/>
</dbReference>
<dbReference type="NCBIfam" id="TIGR00007">
    <property type="entry name" value="1-(5-phosphoribosyl)-5-[(5-phosphoribosylamino)methylideneamino]imidazole-4-carboxamide isomerase"/>
    <property type="match status" value="1"/>
</dbReference>
<dbReference type="PANTHER" id="PTHR43090">
    <property type="entry name" value="1-(5-PHOSPHORIBOSYL)-5-[(5-PHOSPHORIBOSYLAMINO)METHYLIDENEAMINO] IMIDAZOLE-4-CARBOXAMIDE ISOMERASE"/>
    <property type="match status" value="1"/>
</dbReference>
<dbReference type="PANTHER" id="PTHR43090:SF2">
    <property type="entry name" value="1-(5-PHOSPHORIBOSYL)-5-[(5-PHOSPHORIBOSYLAMINO)METHYLIDENEAMINO] IMIDAZOLE-4-CARBOXAMIDE ISOMERASE"/>
    <property type="match status" value="1"/>
</dbReference>
<dbReference type="Pfam" id="PF00977">
    <property type="entry name" value="His_biosynth"/>
    <property type="match status" value="1"/>
</dbReference>
<dbReference type="SUPFAM" id="SSF51366">
    <property type="entry name" value="Ribulose-phoshate binding barrel"/>
    <property type="match status" value="1"/>
</dbReference>
<protein>
    <recommendedName>
        <fullName evidence="1">1-(5-phosphoribosyl)-5-[(5-phosphoribosylamino)methylideneamino] imidazole-4-carboxamide isomerase</fullName>
        <ecNumber evidence="1">5.3.1.16</ecNumber>
    </recommendedName>
    <alternativeName>
        <fullName evidence="1">Phosphoribosylformimino-5-aminoimidazole carboxamide ribotide isomerase</fullName>
    </alternativeName>
</protein>
<comment type="catalytic activity">
    <reaction evidence="1">
        <text>1-(5-phospho-beta-D-ribosyl)-5-[(5-phospho-beta-D-ribosylamino)methylideneamino]imidazole-4-carboxamide = 5-[(5-phospho-1-deoxy-D-ribulos-1-ylimino)methylamino]-1-(5-phospho-beta-D-ribosyl)imidazole-4-carboxamide</text>
        <dbReference type="Rhea" id="RHEA:15469"/>
        <dbReference type="ChEBI" id="CHEBI:58435"/>
        <dbReference type="ChEBI" id="CHEBI:58525"/>
        <dbReference type="EC" id="5.3.1.16"/>
    </reaction>
</comment>
<comment type="pathway">
    <text evidence="1">Amino-acid biosynthesis; L-histidine biosynthesis; L-histidine from 5-phospho-alpha-D-ribose 1-diphosphate: step 4/9.</text>
</comment>
<comment type="subcellular location">
    <subcellularLocation>
        <location evidence="1">Cytoplasm</location>
    </subcellularLocation>
</comment>
<comment type="similarity">
    <text evidence="1">Belongs to the HisA/HisF family.</text>
</comment>
<proteinExistence type="inferred from homology"/>
<name>HIS4_CALBD</name>
<feature type="chain" id="PRO_1000148948" description="1-(5-phosphoribosyl)-5-[(5-phosphoribosylamino)methylideneamino] imidazole-4-carboxamide isomerase">
    <location>
        <begin position="1"/>
        <end position="237"/>
    </location>
</feature>
<feature type="active site" description="Proton acceptor" evidence="1">
    <location>
        <position position="8"/>
    </location>
</feature>
<feature type="active site" description="Proton donor" evidence="1">
    <location>
        <position position="130"/>
    </location>
</feature>
<organism>
    <name type="scientific">Caldicellulosiruptor bescii (strain ATCC BAA-1888 / DSM 6725 / KCTC 15123 / Z-1320)</name>
    <name type="common">Anaerocellum thermophilum</name>
    <dbReference type="NCBI Taxonomy" id="521460"/>
    <lineage>
        <taxon>Bacteria</taxon>
        <taxon>Bacillati</taxon>
        <taxon>Bacillota</taxon>
        <taxon>Bacillota incertae sedis</taxon>
        <taxon>Caldicellulosiruptorales</taxon>
        <taxon>Caldicellulosiruptoraceae</taxon>
        <taxon>Caldicellulosiruptor</taxon>
    </lineage>
</organism>
<evidence type="ECO:0000255" key="1">
    <source>
        <dbReference type="HAMAP-Rule" id="MF_01014"/>
    </source>
</evidence>
<gene>
    <name evidence="1" type="primary">hisA</name>
    <name type="ordered locus">Athe_1474</name>
</gene>
<sequence>MIVIPAIDLIDGKCVRLTQGDYSQVQLFNSDPIEQAKLFEKSGAKYVHVVDLDGAKVGRPVNFEVIRNIKRVTSLTVECGGGIRDKATVELYISSGVNYIILGSVIFKNPDFVNEVMKVFGKERFIASLDFKDGFVKLSGWQEATTITIEEGIMKIKTLGFERLIYTDITTDGMLKGHNFEAAKYIRELFDGFLTASGGISTKEDIMRLKSIGVDAAVVGKALYTGQLKLEEVINLL</sequence>
<reference key="1">
    <citation type="submission" date="2009-01" db="EMBL/GenBank/DDBJ databases">
        <title>Complete sequence of chromosome of Caldicellulosiruptor becscii DSM 6725.</title>
        <authorList>
            <person name="Lucas S."/>
            <person name="Copeland A."/>
            <person name="Lapidus A."/>
            <person name="Glavina del Rio T."/>
            <person name="Tice H."/>
            <person name="Bruce D."/>
            <person name="Goodwin L."/>
            <person name="Pitluck S."/>
            <person name="Sims D."/>
            <person name="Meincke L."/>
            <person name="Brettin T."/>
            <person name="Detter J.C."/>
            <person name="Han C."/>
            <person name="Larimer F."/>
            <person name="Land M."/>
            <person name="Hauser L."/>
            <person name="Kyrpides N."/>
            <person name="Ovchinnikova G."/>
            <person name="Kataeva I."/>
            <person name="Adams M.W.W."/>
        </authorList>
    </citation>
    <scope>NUCLEOTIDE SEQUENCE [LARGE SCALE GENOMIC DNA]</scope>
    <source>
        <strain>ATCC BAA-1888 / DSM 6725 / KCTC 15123 / Z-1320</strain>
    </source>
</reference>